<proteinExistence type="inferred from homology"/>
<feature type="chain" id="PRO_0000075675" description="Bifunctional enzyme IspD/IspF">
    <location>
        <begin position="1"/>
        <end position="379"/>
    </location>
</feature>
<feature type="region of interest" description="2-C-methyl-D-erythritol 4-phosphate cytidylyltransferase" evidence="1">
    <location>
        <begin position="1"/>
        <end position="223"/>
    </location>
</feature>
<feature type="region of interest" description="2-C-methyl-D-erythritol 2,4-cyclodiphosphate synthase" evidence="1">
    <location>
        <begin position="224"/>
        <end position="379"/>
    </location>
</feature>
<feature type="binding site" evidence="1">
    <location>
        <begin position="230"/>
        <end position="232"/>
    </location>
    <ligand>
        <name>4-CDP-2-C-methyl-D-erythritol 2-phosphate</name>
        <dbReference type="ChEBI" id="CHEBI:57919"/>
    </ligand>
</feature>
<feature type="binding site" evidence="1">
    <location>
        <position position="230"/>
    </location>
    <ligand>
        <name>a divalent metal cation</name>
        <dbReference type="ChEBI" id="CHEBI:60240"/>
    </ligand>
</feature>
<feature type="binding site" evidence="1">
    <location>
        <position position="232"/>
    </location>
    <ligand>
        <name>a divalent metal cation</name>
        <dbReference type="ChEBI" id="CHEBI:60240"/>
    </ligand>
</feature>
<feature type="binding site" evidence="1">
    <location>
        <begin position="256"/>
        <end position="257"/>
    </location>
    <ligand>
        <name>4-CDP-2-C-methyl-D-erythritol 2-phosphate</name>
        <dbReference type="ChEBI" id="CHEBI:57919"/>
    </ligand>
</feature>
<feature type="binding site" evidence="1">
    <location>
        <position position="264"/>
    </location>
    <ligand>
        <name>a divalent metal cation</name>
        <dbReference type="ChEBI" id="CHEBI:60240"/>
    </ligand>
</feature>
<feature type="binding site" evidence="1">
    <location>
        <begin position="278"/>
        <end position="280"/>
    </location>
    <ligand>
        <name>4-CDP-2-C-methyl-D-erythritol 2-phosphate</name>
        <dbReference type="ChEBI" id="CHEBI:57919"/>
    </ligand>
</feature>
<feature type="binding site" evidence="1">
    <location>
        <begin position="354"/>
        <end position="357"/>
    </location>
    <ligand>
        <name>4-CDP-2-C-methyl-D-erythritol 2-phosphate</name>
        <dbReference type="ChEBI" id="CHEBI:57919"/>
    </ligand>
</feature>
<feature type="binding site" evidence="1">
    <location>
        <position position="361"/>
    </location>
    <ligand>
        <name>4-CDP-2-C-methyl-D-erythritol 2-phosphate</name>
        <dbReference type="ChEBI" id="CHEBI:57919"/>
    </ligand>
</feature>
<feature type="binding site" evidence="1">
    <location>
        <position position="364"/>
    </location>
    <ligand>
        <name>4-CDP-2-C-methyl-D-erythritol 2-phosphate</name>
        <dbReference type="ChEBI" id="CHEBI:57919"/>
    </ligand>
</feature>
<feature type="site" description="Transition state stabilizer" evidence="1">
    <location>
        <position position="15"/>
    </location>
</feature>
<feature type="site" description="Transition state stabilizer" evidence="1">
    <location>
        <position position="22"/>
    </location>
</feature>
<feature type="site" description="Positions MEP for the nucleophilic attack" evidence="1">
    <location>
        <position position="146"/>
    </location>
</feature>
<feature type="site" description="Positions MEP for the nucleophilic attack" evidence="1">
    <location>
        <position position="199"/>
    </location>
</feature>
<feature type="site" description="Transition state stabilizer" evidence="1">
    <location>
        <position position="256"/>
    </location>
</feature>
<feature type="site" description="Transition state stabilizer" evidence="1">
    <location>
        <position position="355"/>
    </location>
</feature>
<keyword id="KW-0414">Isoprene biosynthesis</keyword>
<keyword id="KW-0456">Lyase</keyword>
<keyword id="KW-0479">Metal-binding</keyword>
<keyword id="KW-0511">Multifunctional enzyme</keyword>
<keyword id="KW-0548">Nucleotidyltransferase</keyword>
<keyword id="KW-1185">Reference proteome</keyword>
<keyword id="KW-0808">Transferase</keyword>
<evidence type="ECO:0000255" key="1">
    <source>
        <dbReference type="HAMAP-Rule" id="MF_01520"/>
    </source>
</evidence>
<organism>
    <name type="scientific">Rhodobacter capsulatus (strain ATCC BAA-309 / NBRC 16581 / SB1003)</name>
    <dbReference type="NCBI Taxonomy" id="272942"/>
    <lineage>
        <taxon>Bacteria</taxon>
        <taxon>Pseudomonadati</taxon>
        <taxon>Pseudomonadota</taxon>
        <taxon>Alphaproteobacteria</taxon>
        <taxon>Rhodobacterales</taxon>
        <taxon>Rhodobacter group</taxon>
        <taxon>Rhodobacter</taxon>
    </lineage>
</organism>
<sequence length="379" mass="39511">MTVAVIIVAAGRGTRAGEGLPKQWRDLAGRPVLAQTVAAFAGLGRILVVLHPDDMGLGMDLLGGSVVLVAGGSTRSESVKNALEALEGSDVTRVLIHDGARPLVPASVTAAVLAALETTPGAAPALAVTDALWRGEAGLVAGTQDREGLYRAQTPQGFRFPEILAAHRAHPGGAADDVEVARHAGLSVAIVPGHEDNLKITYAPDFARAEAILRERKGLTMDVRLGNGYDVHAFCEGDHVVLCGVKVPHVKALLGHSDADVGMHALTDAIYGALAEGDIGRHFPPSDPQWKGAASWIFLDHAAKLAKSRGFRIGNADVTLICERPKVGPHAVAMAAELARIMEIEPSRVSVKATTSERLGFTGREEGIASIATVTLIGA</sequence>
<gene>
    <name evidence="1" type="primary">ispDF</name>
    <name type="ordered locus">RCAP_rcc01795</name>
</gene>
<protein>
    <recommendedName>
        <fullName evidence="1">Bifunctional enzyme IspD/IspF</fullName>
    </recommendedName>
    <domain>
        <recommendedName>
            <fullName evidence="1">2-C-methyl-D-erythritol 4-phosphate cytidylyltransferase</fullName>
            <ecNumber evidence="1">2.7.7.60</ecNumber>
        </recommendedName>
        <alternativeName>
            <fullName evidence="1">4-diphosphocytidyl-2C-methyl-D-erythritol synthase</fullName>
        </alternativeName>
        <alternativeName>
            <fullName evidence="1">MEP cytidylyltransferase</fullName>
            <shortName evidence="1">MCT</shortName>
        </alternativeName>
    </domain>
    <domain>
        <recommendedName>
            <fullName evidence="1">2-C-methyl-D-erythritol 2,4-cyclodiphosphate synthase</fullName>
            <shortName evidence="1">MECDP-synthase</shortName>
            <shortName evidence="1">MECPP-synthase</shortName>
            <shortName evidence="1">MECPS</shortName>
            <ecNumber evidence="1">4.6.1.12</ecNumber>
        </recommendedName>
    </domain>
</protein>
<dbReference type="EC" id="2.7.7.60" evidence="1"/>
<dbReference type="EC" id="4.6.1.12" evidence="1"/>
<dbReference type="EMBL" id="X72382">
    <property type="protein sequence ID" value="CAA51072.1"/>
    <property type="molecule type" value="Genomic_DNA"/>
</dbReference>
<dbReference type="EMBL" id="CP001312">
    <property type="protein sequence ID" value="ADE85540.1"/>
    <property type="molecule type" value="Genomic_DNA"/>
</dbReference>
<dbReference type="PIR" id="S34980">
    <property type="entry name" value="S34980"/>
</dbReference>
<dbReference type="RefSeq" id="WP_013067519.1">
    <property type="nucleotide sequence ID" value="NC_014034.1"/>
</dbReference>
<dbReference type="SMR" id="Q08113"/>
<dbReference type="STRING" id="272942.RCAP_rcc01795"/>
<dbReference type="GeneID" id="31490670"/>
<dbReference type="KEGG" id="rcp:RCAP_rcc01795"/>
<dbReference type="eggNOG" id="COG0245">
    <property type="taxonomic scope" value="Bacteria"/>
</dbReference>
<dbReference type="eggNOG" id="COG1211">
    <property type="taxonomic scope" value="Bacteria"/>
</dbReference>
<dbReference type="HOGENOM" id="CLU_042800_0_0_5"/>
<dbReference type="OrthoDB" id="9804336at2"/>
<dbReference type="UniPathway" id="UPA00056">
    <property type="reaction ID" value="UER00093"/>
</dbReference>
<dbReference type="UniPathway" id="UPA00056">
    <property type="reaction ID" value="UER00095"/>
</dbReference>
<dbReference type="Proteomes" id="UP000002361">
    <property type="component" value="Chromosome"/>
</dbReference>
<dbReference type="GO" id="GO:0008685">
    <property type="term" value="F:2-C-methyl-D-erythritol 2,4-cyclodiphosphate synthase activity"/>
    <property type="evidence" value="ECO:0007669"/>
    <property type="project" value="UniProtKB-UniRule"/>
</dbReference>
<dbReference type="GO" id="GO:0050518">
    <property type="term" value="F:2-C-methyl-D-erythritol 4-phosphate cytidylyltransferase activity"/>
    <property type="evidence" value="ECO:0007669"/>
    <property type="project" value="UniProtKB-UniRule"/>
</dbReference>
<dbReference type="GO" id="GO:0046872">
    <property type="term" value="F:metal ion binding"/>
    <property type="evidence" value="ECO:0007669"/>
    <property type="project" value="UniProtKB-KW"/>
</dbReference>
<dbReference type="GO" id="GO:0019288">
    <property type="term" value="P:isopentenyl diphosphate biosynthetic process, methylerythritol 4-phosphate pathway"/>
    <property type="evidence" value="ECO:0007669"/>
    <property type="project" value="UniProtKB-UniRule"/>
</dbReference>
<dbReference type="GO" id="GO:0016114">
    <property type="term" value="P:terpenoid biosynthetic process"/>
    <property type="evidence" value="ECO:0007669"/>
    <property type="project" value="InterPro"/>
</dbReference>
<dbReference type="CDD" id="cd02516">
    <property type="entry name" value="CDP-ME_synthetase"/>
    <property type="match status" value="1"/>
</dbReference>
<dbReference type="CDD" id="cd00554">
    <property type="entry name" value="MECDP_synthase"/>
    <property type="match status" value="1"/>
</dbReference>
<dbReference type="Gene3D" id="3.30.1330.50">
    <property type="entry name" value="2-C-methyl-D-erythritol 2,4-cyclodiphosphate synthase"/>
    <property type="match status" value="1"/>
</dbReference>
<dbReference type="Gene3D" id="3.90.550.10">
    <property type="entry name" value="Spore Coat Polysaccharide Biosynthesis Protein SpsA, Chain A"/>
    <property type="match status" value="1"/>
</dbReference>
<dbReference type="HAMAP" id="MF_00108">
    <property type="entry name" value="IspD"/>
    <property type="match status" value="1"/>
</dbReference>
<dbReference type="HAMAP" id="MF_01520">
    <property type="entry name" value="IspDF"/>
    <property type="match status" value="1"/>
</dbReference>
<dbReference type="HAMAP" id="MF_00107">
    <property type="entry name" value="IspF"/>
    <property type="match status" value="1"/>
</dbReference>
<dbReference type="InterPro" id="IPR001228">
    <property type="entry name" value="IspD"/>
</dbReference>
<dbReference type="InterPro" id="IPR026596">
    <property type="entry name" value="IspD/F"/>
</dbReference>
<dbReference type="InterPro" id="IPR034683">
    <property type="entry name" value="IspD/TarI"/>
</dbReference>
<dbReference type="InterPro" id="IPR018294">
    <property type="entry name" value="ISPD_synthase_CS"/>
</dbReference>
<dbReference type="InterPro" id="IPR003526">
    <property type="entry name" value="MECDP_synthase"/>
</dbReference>
<dbReference type="InterPro" id="IPR020555">
    <property type="entry name" value="MECDP_synthase_CS"/>
</dbReference>
<dbReference type="InterPro" id="IPR036571">
    <property type="entry name" value="MECDP_synthase_sf"/>
</dbReference>
<dbReference type="InterPro" id="IPR029044">
    <property type="entry name" value="Nucleotide-diphossugar_trans"/>
</dbReference>
<dbReference type="NCBIfam" id="TIGR00453">
    <property type="entry name" value="ispD"/>
    <property type="match status" value="1"/>
</dbReference>
<dbReference type="NCBIfam" id="TIGR00151">
    <property type="entry name" value="ispF"/>
    <property type="match status" value="1"/>
</dbReference>
<dbReference type="NCBIfam" id="NF006899">
    <property type="entry name" value="PRK09382.1"/>
    <property type="match status" value="1"/>
</dbReference>
<dbReference type="PANTHER" id="PTHR43181">
    <property type="entry name" value="2-C-METHYL-D-ERYTHRITOL 2,4-CYCLODIPHOSPHATE SYNTHASE, CHLOROPLASTIC"/>
    <property type="match status" value="1"/>
</dbReference>
<dbReference type="PANTHER" id="PTHR43181:SF1">
    <property type="entry name" value="2-C-METHYL-D-ERYTHRITOL 2,4-CYCLODIPHOSPHATE SYNTHASE, CHLOROPLASTIC"/>
    <property type="match status" value="1"/>
</dbReference>
<dbReference type="Pfam" id="PF01128">
    <property type="entry name" value="IspD"/>
    <property type="match status" value="1"/>
</dbReference>
<dbReference type="Pfam" id="PF02542">
    <property type="entry name" value="YgbB"/>
    <property type="match status" value="1"/>
</dbReference>
<dbReference type="SUPFAM" id="SSF69765">
    <property type="entry name" value="IpsF-like"/>
    <property type="match status" value="1"/>
</dbReference>
<dbReference type="SUPFAM" id="SSF53448">
    <property type="entry name" value="Nucleotide-diphospho-sugar transferases"/>
    <property type="match status" value="1"/>
</dbReference>
<dbReference type="PROSITE" id="PS01295">
    <property type="entry name" value="ISPD"/>
    <property type="match status" value="1"/>
</dbReference>
<dbReference type="PROSITE" id="PS01350">
    <property type="entry name" value="ISPF"/>
    <property type="match status" value="1"/>
</dbReference>
<reference key="1">
    <citation type="journal article" date="1993" name="Mol. Microbiol.">
        <title>Sequence, genetic, and lacZ fusion analyses of a nifR3-ntrB-ntrC operon in Rhodobacter capsulatus.</title>
        <authorList>
            <person name="Foster-Hartnett D."/>
            <person name="Cullen P.J."/>
            <person name="Gabbert K.K."/>
            <person name="Kranz R.G."/>
        </authorList>
    </citation>
    <scope>NUCLEOTIDE SEQUENCE [GENOMIC DNA]</scope>
    <source>
        <strain>ATCC BAA-309 / NBRC 16581 / SB1003</strain>
    </source>
</reference>
<reference key="2">
    <citation type="journal article" date="2010" name="J. Bacteriol.">
        <title>Complete genome sequence of the photosynthetic purple nonsulfur bacterium Rhodobacter capsulatus SB 1003.</title>
        <authorList>
            <person name="Strnad H."/>
            <person name="Lapidus A."/>
            <person name="Paces J."/>
            <person name="Ulbrich P."/>
            <person name="Vlcek C."/>
            <person name="Paces V."/>
            <person name="Haselkorn R."/>
        </authorList>
    </citation>
    <scope>NUCLEOTIDE SEQUENCE [LARGE SCALE GENOMIC DNA]</scope>
    <source>
        <strain>ATCC BAA-309 / NBRC 16581 / SB1003</strain>
    </source>
</reference>
<accession>Q08113</accession>
<accession>D5AUA1</accession>
<comment type="function">
    <text evidence="1">Bifunctional enzyme that catalyzes the formation of 4-diphosphocytidyl-2-C-methyl-D-erythritol from CTP and 2-C-methyl-D-erythritol 4-phosphate (MEP) (IspD), and catalyzes the conversion of 4-diphosphocytidyl-2-C-methyl-D-erythritol 2-phosphate (CDP-ME2P) to 2-C-methyl-D-erythritol 2,4-cyclodiphosphate (ME-CPP) with a corresponding release of cytidine 5-monophosphate (CMP) (IspF).</text>
</comment>
<comment type="catalytic activity">
    <reaction evidence="1">
        <text>2-C-methyl-D-erythritol 4-phosphate + CTP + H(+) = 4-CDP-2-C-methyl-D-erythritol + diphosphate</text>
        <dbReference type="Rhea" id="RHEA:13429"/>
        <dbReference type="ChEBI" id="CHEBI:15378"/>
        <dbReference type="ChEBI" id="CHEBI:33019"/>
        <dbReference type="ChEBI" id="CHEBI:37563"/>
        <dbReference type="ChEBI" id="CHEBI:57823"/>
        <dbReference type="ChEBI" id="CHEBI:58262"/>
        <dbReference type="EC" id="2.7.7.60"/>
    </reaction>
</comment>
<comment type="catalytic activity">
    <reaction evidence="1">
        <text>4-CDP-2-C-methyl-D-erythritol 2-phosphate = 2-C-methyl-D-erythritol 2,4-cyclic diphosphate + CMP</text>
        <dbReference type="Rhea" id="RHEA:23864"/>
        <dbReference type="ChEBI" id="CHEBI:57919"/>
        <dbReference type="ChEBI" id="CHEBI:58483"/>
        <dbReference type="ChEBI" id="CHEBI:60377"/>
        <dbReference type="EC" id="4.6.1.12"/>
    </reaction>
</comment>
<comment type="cofactor">
    <cofactor evidence="1">
        <name>a divalent metal cation</name>
        <dbReference type="ChEBI" id="CHEBI:60240"/>
    </cofactor>
</comment>
<comment type="pathway">
    <text evidence="1">Isoprenoid biosynthesis; isopentenyl diphosphate biosynthesis via DXP pathway; isopentenyl diphosphate from 1-deoxy-D-xylulose 5-phosphate: step 2/6.</text>
</comment>
<comment type="pathway">
    <text evidence="1">Isoprenoid biosynthesis; isopentenyl diphosphate biosynthesis via DXP pathway; isopentenyl diphosphate from 1-deoxy-D-xylulose 5-phosphate: step 4/6.</text>
</comment>
<comment type="similarity">
    <text evidence="1">In the N-terminal section; belongs to the IspD/TarI cytidylyltransferase family. IspD subfamily.</text>
</comment>
<comment type="similarity">
    <text evidence="1">In the C-terminal section; belongs to the IspF family.</text>
</comment>
<name>ISPDF_RHOCB</name>